<reference key="1">
    <citation type="submission" date="2008-06" db="EMBL/GenBank/DDBJ databases">
        <title>Genome and proteome analysis of A. pleuropneumoniae serotype 7.</title>
        <authorList>
            <person name="Linke B."/>
            <person name="Buettner F."/>
            <person name="Martinez-Arias R."/>
            <person name="Goesmann A."/>
            <person name="Baltes N."/>
            <person name="Tegetmeyer H."/>
            <person name="Singh M."/>
            <person name="Gerlach G.F."/>
        </authorList>
    </citation>
    <scope>NUCLEOTIDE SEQUENCE [LARGE SCALE GENOMIC DNA]</scope>
    <source>
        <strain>AP76</strain>
    </source>
</reference>
<keyword id="KW-0963">Cytoplasm</keyword>
<keyword id="KW-0460">Magnesium</keyword>
<keyword id="KW-0479">Metal-binding</keyword>
<keyword id="KW-0548">Nucleotidyltransferase</keyword>
<keyword id="KW-0694">RNA-binding</keyword>
<keyword id="KW-0808">Transferase</keyword>
<comment type="function">
    <text evidence="1">Involved in mRNA degradation. Catalyzes the phosphorolysis of single-stranded polyribonucleotides processively in the 3'- to 5'-direction.</text>
</comment>
<comment type="catalytic activity">
    <reaction evidence="1">
        <text>RNA(n+1) + phosphate = RNA(n) + a ribonucleoside 5'-diphosphate</text>
        <dbReference type="Rhea" id="RHEA:22096"/>
        <dbReference type="Rhea" id="RHEA-COMP:14527"/>
        <dbReference type="Rhea" id="RHEA-COMP:17342"/>
        <dbReference type="ChEBI" id="CHEBI:43474"/>
        <dbReference type="ChEBI" id="CHEBI:57930"/>
        <dbReference type="ChEBI" id="CHEBI:140395"/>
        <dbReference type="EC" id="2.7.7.8"/>
    </reaction>
</comment>
<comment type="cofactor">
    <cofactor evidence="1">
        <name>Mg(2+)</name>
        <dbReference type="ChEBI" id="CHEBI:18420"/>
    </cofactor>
</comment>
<comment type="subunit">
    <text evidence="1">Component of the RNA degradosome, which is a multiprotein complex involved in RNA processing and mRNA degradation.</text>
</comment>
<comment type="subcellular location">
    <subcellularLocation>
        <location evidence="1">Cytoplasm</location>
    </subcellularLocation>
</comment>
<comment type="similarity">
    <text evidence="1">Belongs to the polyribonucleotide nucleotidyltransferase family.</text>
</comment>
<comment type="sequence caution" evidence="3">
    <conflict type="erroneous initiation">
        <sequence resource="EMBL-CDS" id="ACE61273"/>
    </conflict>
</comment>
<dbReference type="EC" id="2.7.7.8" evidence="1"/>
<dbReference type="EMBL" id="CP001091">
    <property type="protein sequence ID" value="ACE61273.1"/>
    <property type="status" value="ALT_INIT"/>
    <property type="molecule type" value="Genomic_DNA"/>
</dbReference>
<dbReference type="RefSeq" id="WP_005600695.1">
    <property type="nucleotide sequence ID" value="NC_010939.1"/>
</dbReference>
<dbReference type="SMR" id="B3GXC1"/>
<dbReference type="KEGG" id="apa:APP7_0621"/>
<dbReference type="HOGENOM" id="CLU_004217_2_2_6"/>
<dbReference type="Proteomes" id="UP000001226">
    <property type="component" value="Chromosome"/>
</dbReference>
<dbReference type="GO" id="GO:0005829">
    <property type="term" value="C:cytosol"/>
    <property type="evidence" value="ECO:0007669"/>
    <property type="project" value="TreeGrafter"/>
</dbReference>
<dbReference type="GO" id="GO:0000175">
    <property type="term" value="F:3'-5'-RNA exonuclease activity"/>
    <property type="evidence" value="ECO:0007669"/>
    <property type="project" value="TreeGrafter"/>
</dbReference>
<dbReference type="GO" id="GO:0000287">
    <property type="term" value="F:magnesium ion binding"/>
    <property type="evidence" value="ECO:0007669"/>
    <property type="project" value="UniProtKB-UniRule"/>
</dbReference>
<dbReference type="GO" id="GO:0004654">
    <property type="term" value="F:polyribonucleotide nucleotidyltransferase activity"/>
    <property type="evidence" value="ECO:0007669"/>
    <property type="project" value="UniProtKB-UniRule"/>
</dbReference>
<dbReference type="GO" id="GO:0003723">
    <property type="term" value="F:RNA binding"/>
    <property type="evidence" value="ECO:0007669"/>
    <property type="project" value="UniProtKB-UniRule"/>
</dbReference>
<dbReference type="GO" id="GO:0006402">
    <property type="term" value="P:mRNA catabolic process"/>
    <property type="evidence" value="ECO:0007669"/>
    <property type="project" value="UniProtKB-UniRule"/>
</dbReference>
<dbReference type="GO" id="GO:0006396">
    <property type="term" value="P:RNA processing"/>
    <property type="evidence" value="ECO:0007669"/>
    <property type="project" value="InterPro"/>
</dbReference>
<dbReference type="CDD" id="cd02393">
    <property type="entry name" value="KH-I_PNPase"/>
    <property type="match status" value="1"/>
</dbReference>
<dbReference type="CDD" id="cd11363">
    <property type="entry name" value="RNase_PH_PNPase_1"/>
    <property type="match status" value="1"/>
</dbReference>
<dbReference type="CDD" id="cd11364">
    <property type="entry name" value="RNase_PH_PNPase_2"/>
    <property type="match status" value="1"/>
</dbReference>
<dbReference type="CDD" id="cd04472">
    <property type="entry name" value="S1_PNPase"/>
    <property type="match status" value="1"/>
</dbReference>
<dbReference type="FunFam" id="2.40.50.140:FF:000023">
    <property type="entry name" value="Polyribonucleotide nucleotidyltransferase"/>
    <property type="match status" value="1"/>
</dbReference>
<dbReference type="FunFam" id="3.30.1370.10:FF:000001">
    <property type="entry name" value="Polyribonucleotide nucleotidyltransferase"/>
    <property type="match status" value="1"/>
</dbReference>
<dbReference type="FunFam" id="3.30.230.70:FF:000001">
    <property type="entry name" value="Polyribonucleotide nucleotidyltransferase"/>
    <property type="match status" value="1"/>
</dbReference>
<dbReference type="FunFam" id="3.30.230.70:FF:000002">
    <property type="entry name" value="Polyribonucleotide nucleotidyltransferase"/>
    <property type="match status" value="1"/>
</dbReference>
<dbReference type="Gene3D" id="3.30.230.70">
    <property type="entry name" value="GHMP Kinase, N-terminal domain"/>
    <property type="match status" value="2"/>
</dbReference>
<dbReference type="Gene3D" id="3.30.1370.10">
    <property type="entry name" value="K Homology domain, type 1"/>
    <property type="match status" value="1"/>
</dbReference>
<dbReference type="Gene3D" id="2.40.50.140">
    <property type="entry name" value="Nucleic acid-binding proteins"/>
    <property type="match status" value="1"/>
</dbReference>
<dbReference type="HAMAP" id="MF_01595">
    <property type="entry name" value="PNPase"/>
    <property type="match status" value="1"/>
</dbReference>
<dbReference type="InterPro" id="IPR001247">
    <property type="entry name" value="ExoRNase_PH_dom1"/>
</dbReference>
<dbReference type="InterPro" id="IPR015847">
    <property type="entry name" value="ExoRNase_PH_dom2"/>
</dbReference>
<dbReference type="InterPro" id="IPR036345">
    <property type="entry name" value="ExoRNase_PH_dom2_sf"/>
</dbReference>
<dbReference type="InterPro" id="IPR004087">
    <property type="entry name" value="KH_dom"/>
</dbReference>
<dbReference type="InterPro" id="IPR004088">
    <property type="entry name" value="KH_dom_type_1"/>
</dbReference>
<dbReference type="InterPro" id="IPR036612">
    <property type="entry name" value="KH_dom_type_1_sf"/>
</dbReference>
<dbReference type="InterPro" id="IPR012340">
    <property type="entry name" value="NA-bd_OB-fold"/>
</dbReference>
<dbReference type="InterPro" id="IPR012162">
    <property type="entry name" value="PNPase"/>
</dbReference>
<dbReference type="InterPro" id="IPR027408">
    <property type="entry name" value="PNPase/RNase_PH_dom_sf"/>
</dbReference>
<dbReference type="InterPro" id="IPR015848">
    <property type="entry name" value="PNPase_PH_RNA-bd_bac/org-type"/>
</dbReference>
<dbReference type="InterPro" id="IPR036456">
    <property type="entry name" value="PNPase_PH_RNA-bd_sf"/>
</dbReference>
<dbReference type="InterPro" id="IPR020568">
    <property type="entry name" value="Ribosomal_Su5_D2-typ_SF"/>
</dbReference>
<dbReference type="InterPro" id="IPR003029">
    <property type="entry name" value="S1_domain"/>
</dbReference>
<dbReference type="NCBIfam" id="TIGR03591">
    <property type="entry name" value="polynuc_phos"/>
    <property type="match status" value="1"/>
</dbReference>
<dbReference type="NCBIfam" id="NF008805">
    <property type="entry name" value="PRK11824.1"/>
    <property type="match status" value="1"/>
</dbReference>
<dbReference type="PANTHER" id="PTHR11252">
    <property type="entry name" value="POLYRIBONUCLEOTIDE NUCLEOTIDYLTRANSFERASE"/>
    <property type="match status" value="1"/>
</dbReference>
<dbReference type="PANTHER" id="PTHR11252:SF0">
    <property type="entry name" value="POLYRIBONUCLEOTIDE NUCLEOTIDYLTRANSFERASE 1, MITOCHONDRIAL"/>
    <property type="match status" value="1"/>
</dbReference>
<dbReference type="Pfam" id="PF00013">
    <property type="entry name" value="KH_1"/>
    <property type="match status" value="1"/>
</dbReference>
<dbReference type="Pfam" id="PF03726">
    <property type="entry name" value="PNPase"/>
    <property type="match status" value="1"/>
</dbReference>
<dbReference type="Pfam" id="PF01138">
    <property type="entry name" value="RNase_PH"/>
    <property type="match status" value="2"/>
</dbReference>
<dbReference type="Pfam" id="PF03725">
    <property type="entry name" value="RNase_PH_C"/>
    <property type="match status" value="2"/>
</dbReference>
<dbReference type="Pfam" id="PF00575">
    <property type="entry name" value="S1"/>
    <property type="match status" value="1"/>
</dbReference>
<dbReference type="PIRSF" id="PIRSF005499">
    <property type="entry name" value="PNPase"/>
    <property type="match status" value="1"/>
</dbReference>
<dbReference type="SMART" id="SM00322">
    <property type="entry name" value="KH"/>
    <property type="match status" value="1"/>
</dbReference>
<dbReference type="SMART" id="SM00316">
    <property type="entry name" value="S1"/>
    <property type="match status" value="1"/>
</dbReference>
<dbReference type="SUPFAM" id="SSF54791">
    <property type="entry name" value="Eukaryotic type KH-domain (KH-domain type I)"/>
    <property type="match status" value="1"/>
</dbReference>
<dbReference type="SUPFAM" id="SSF50249">
    <property type="entry name" value="Nucleic acid-binding proteins"/>
    <property type="match status" value="1"/>
</dbReference>
<dbReference type="SUPFAM" id="SSF46915">
    <property type="entry name" value="Polynucleotide phosphorylase/guanosine pentaphosphate synthase (PNPase/GPSI), domain 3"/>
    <property type="match status" value="1"/>
</dbReference>
<dbReference type="SUPFAM" id="SSF55666">
    <property type="entry name" value="Ribonuclease PH domain 2-like"/>
    <property type="match status" value="2"/>
</dbReference>
<dbReference type="SUPFAM" id="SSF54211">
    <property type="entry name" value="Ribosomal protein S5 domain 2-like"/>
    <property type="match status" value="2"/>
</dbReference>
<dbReference type="PROSITE" id="PS50084">
    <property type="entry name" value="KH_TYPE_1"/>
    <property type="match status" value="1"/>
</dbReference>
<dbReference type="PROSITE" id="PS50126">
    <property type="entry name" value="S1"/>
    <property type="match status" value="1"/>
</dbReference>
<evidence type="ECO:0000255" key="1">
    <source>
        <dbReference type="HAMAP-Rule" id="MF_01595"/>
    </source>
</evidence>
<evidence type="ECO:0000256" key="2">
    <source>
        <dbReference type="SAM" id="MobiDB-lite"/>
    </source>
</evidence>
<evidence type="ECO:0000305" key="3"/>
<proteinExistence type="inferred from homology"/>
<sequence>MNPIVKQFKYGQHTVTLETGAIARQATAAVMASMDDTTVFVTVVAKKEVKEGQDFFPLTVDYQERTYAAGRIPGGFFKREGRPSEGETLIARLIDRPVRPLFPEGFFNEIQVIATVVSVNPQISPDLVAMIGASAALSLSGVPFNGPIGAARVGFINDQFVLNPTTSEQKISRLDLVVAGTDKAVLMVESEADILSEEQMLSAVVFGHQQQQVVIENIKEFVKEAGKPRWDWVAPEPNTALINQVKALAEARIGDAYRITEKQARYEQIDAIKADVIAQLTAQDETVSEGAIIDIITALESSIVRGRIIAGEPRIDGRTVDTVRALDICTGVLPRTHGSAIFTRGETQALAVATLGTERDAQIIDELTGEKSDRFLFHYNFPPYSVGETGRIGSPKRREIGHGRLAKRGVLAVMPTAEEFPYVVRVVSEITESNGSSSMASVCGASLALMDAGVPIKAAVAGIAMGLVKEEEKFVVLSDILGDEDHLGDMDFKVAGTREGVTALQMDIKIEGITPEIMQIALNQAKGARMHILSVMEQAIPAPRADISDFAPRIHTMKIDPKKIKDVIGKGGAVIRALTEETGTSIDIDDDGTVKIAATDNNAAKAVMARIEDIVAEVEVNAIYKGKVTRVVDFGAFVSILGGKEGLVHISQITNERVERVADYLSVGQEVTVKVVEIDRQNRIRLTMKDLNNDTPVAENVTEEAEVSSEQQAEI</sequence>
<accession>B3GXC1</accession>
<feature type="chain" id="PRO_0000381863" description="Polyribonucleotide nucleotidyltransferase">
    <location>
        <begin position="1"/>
        <end position="715"/>
    </location>
</feature>
<feature type="domain" description="KH" evidence="1">
    <location>
        <begin position="552"/>
        <end position="611"/>
    </location>
</feature>
<feature type="domain" description="S1 motif" evidence="1">
    <location>
        <begin position="621"/>
        <end position="689"/>
    </location>
</feature>
<feature type="region of interest" description="Disordered" evidence="2">
    <location>
        <begin position="695"/>
        <end position="715"/>
    </location>
</feature>
<feature type="binding site" evidence="1">
    <location>
        <position position="485"/>
    </location>
    <ligand>
        <name>Mg(2+)</name>
        <dbReference type="ChEBI" id="CHEBI:18420"/>
    </ligand>
</feature>
<feature type="binding site" evidence="1">
    <location>
        <position position="491"/>
    </location>
    <ligand>
        <name>Mg(2+)</name>
        <dbReference type="ChEBI" id="CHEBI:18420"/>
    </ligand>
</feature>
<protein>
    <recommendedName>
        <fullName evidence="1">Polyribonucleotide nucleotidyltransferase</fullName>
        <ecNumber evidence="1">2.7.7.8</ecNumber>
    </recommendedName>
    <alternativeName>
        <fullName evidence="1">Polynucleotide phosphorylase</fullName>
        <shortName evidence="1">PNPase</shortName>
    </alternativeName>
</protein>
<organism>
    <name type="scientific">Actinobacillus pleuropneumoniae serotype 7 (strain AP76)</name>
    <dbReference type="NCBI Taxonomy" id="537457"/>
    <lineage>
        <taxon>Bacteria</taxon>
        <taxon>Pseudomonadati</taxon>
        <taxon>Pseudomonadota</taxon>
        <taxon>Gammaproteobacteria</taxon>
        <taxon>Pasteurellales</taxon>
        <taxon>Pasteurellaceae</taxon>
        <taxon>Actinobacillus</taxon>
    </lineage>
</organism>
<gene>
    <name evidence="1" type="primary">pnp</name>
    <name type="ordered locus">APP7_0621</name>
</gene>
<name>PNP_ACTP7</name>